<sequence length="167" mass="17533">MSHIEKQAGELQEKLIAVNRVSKTVKGGRIFSFTALTVVGDGNGRVGFGYGKAREVPAAIQKAMEKARRAMINVALNNGTLQHPVKGAHTGSRVFMQPASEGTGIIAGGAMRAVLEVAGVHNVLAKAYGSTNPINVVRATIAALEDMKSPEMVAAKRGKSVEEILGK</sequence>
<evidence type="ECO:0000255" key="1">
    <source>
        <dbReference type="HAMAP-Rule" id="MF_01307"/>
    </source>
</evidence>
<evidence type="ECO:0000305" key="2"/>
<name>RS5_YERPA</name>
<proteinExistence type="inferred from homology"/>
<reference key="1">
    <citation type="journal article" date="2006" name="J. Bacteriol.">
        <title>Complete genome sequence of Yersinia pestis strains Antiqua and Nepal516: evidence of gene reduction in an emerging pathogen.</title>
        <authorList>
            <person name="Chain P.S.G."/>
            <person name="Hu P."/>
            <person name="Malfatti S.A."/>
            <person name="Radnedge L."/>
            <person name="Larimer F."/>
            <person name="Vergez L.M."/>
            <person name="Worsham P."/>
            <person name="Chu M.C."/>
            <person name="Andersen G.L."/>
        </authorList>
    </citation>
    <scope>NUCLEOTIDE SEQUENCE [LARGE SCALE GENOMIC DNA]</scope>
    <source>
        <strain>Antiqua</strain>
    </source>
</reference>
<accession>Q1C2W4</accession>
<feature type="chain" id="PRO_1000086076" description="Small ribosomal subunit protein uS5">
    <location>
        <begin position="1"/>
        <end position="167"/>
    </location>
</feature>
<feature type="domain" description="S5 DRBM" evidence="1">
    <location>
        <begin position="11"/>
        <end position="74"/>
    </location>
</feature>
<keyword id="KW-0687">Ribonucleoprotein</keyword>
<keyword id="KW-0689">Ribosomal protein</keyword>
<keyword id="KW-0694">RNA-binding</keyword>
<keyword id="KW-0699">rRNA-binding</keyword>
<protein>
    <recommendedName>
        <fullName evidence="1">Small ribosomal subunit protein uS5</fullName>
    </recommendedName>
    <alternativeName>
        <fullName evidence="2">30S ribosomal protein S5</fullName>
    </alternativeName>
</protein>
<dbReference type="EMBL" id="CP000308">
    <property type="protein sequence ID" value="ABG15208.1"/>
    <property type="molecule type" value="Genomic_DNA"/>
</dbReference>
<dbReference type="RefSeq" id="WP_002213337.1">
    <property type="nucleotide sequence ID" value="NZ_CP009906.1"/>
</dbReference>
<dbReference type="SMR" id="Q1C2W4"/>
<dbReference type="GeneID" id="82552805"/>
<dbReference type="KEGG" id="ypa:YPA_3246"/>
<dbReference type="Proteomes" id="UP000001971">
    <property type="component" value="Chromosome"/>
</dbReference>
<dbReference type="GO" id="GO:0015935">
    <property type="term" value="C:small ribosomal subunit"/>
    <property type="evidence" value="ECO:0007669"/>
    <property type="project" value="InterPro"/>
</dbReference>
<dbReference type="GO" id="GO:0019843">
    <property type="term" value="F:rRNA binding"/>
    <property type="evidence" value="ECO:0007669"/>
    <property type="project" value="UniProtKB-UniRule"/>
</dbReference>
<dbReference type="GO" id="GO:0003735">
    <property type="term" value="F:structural constituent of ribosome"/>
    <property type="evidence" value="ECO:0007669"/>
    <property type="project" value="InterPro"/>
</dbReference>
<dbReference type="GO" id="GO:0006412">
    <property type="term" value="P:translation"/>
    <property type="evidence" value="ECO:0007669"/>
    <property type="project" value="UniProtKB-UniRule"/>
</dbReference>
<dbReference type="FunFam" id="3.30.160.20:FF:000001">
    <property type="entry name" value="30S ribosomal protein S5"/>
    <property type="match status" value="1"/>
</dbReference>
<dbReference type="FunFam" id="3.30.230.10:FF:000002">
    <property type="entry name" value="30S ribosomal protein S5"/>
    <property type="match status" value="1"/>
</dbReference>
<dbReference type="Gene3D" id="3.30.160.20">
    <property type="match status" value="1"/>
</dbReference>
<dbReference type="Gene3D" id="3.30.230.10">
    <property type="match status" value="1"/>
</dbReference>
<dbReference type="HAMAP" id="MF_01307_B">
    <property type="entry name" value="Ribosomal_uS5_B"/>
    <property type="match status" value="1"/>
</dbReference>
<dbReference type="InterPro" id="IPR020568">
    <property type="entry name" value="Ribosomal_Su5_D2-typ_SF"/>
</dbReference>
<dbReference type="InterPro" id="IPR000851">
    <property type="entry name" value="Ribosomal_uS5"/>
</dbReference>
<dbReference type="InterPro" id="IPR005712">
    <property type="entry name" value="Ribosomal_uS5_bac-type"/>
</dbReference>
<dbReference type="InterPro" id="IPR005324">
    <property type="entry name" value="Ribosomal_uS5_C"/>
</dbReference>
<dbReference type="InterPro" id="IPR013810">
    <property type="entry name" value="Ribosomal_uS5_N"/>
</dbReference>
<dbReference type="InterPro" id="IPR018192">
    <property type="entry name" value="Ribosomal_uS5_N_CS"/>
</dbReference>
<dbReference type="InterPro" id="IPR014721">
    <property type="entry name" value="Ribsml_uS5_D2-typ_fold_subgr"/>
</dbReference>
<dbReference type="NCBIfam" id="TIGR01021">
    <property type="entry name" value="rpsE_bact"/>
    <property type="match status" value="1"/>
</dbReference>
<dbReference type="PANTHER" id="PTHR48277">
    <property type="entry name" value="MITOCHONDRIAL RIBOSOMAL PROTEIN S5"/>
    <property type="match status" value="1"/>
</dbReference>
<dbReference type="PANTHER" id="PTHR48277:SF1">
    <property type="entry name" value="MITOCHONDRIAL RIBOSOMAL PROTEIN S5"/>
    <property type="match status" value="1"/>
</dbReference>
<dbReference type="Pfam" id="PF00333">
    <property type="entry name" value="Ribosomal_S5"/>
    <property type="match status" value="1"/>
</dbReference>
<dbReference type="Pfam" id="PF03719">
    <property type="entry name" value="Ribosomal_S5_C"/>
    <property type="match status" value="1"/>
</dbReference>
<dbReference type="SUPFAM" id="SSF54768">
    <property type="entry name" value="dsRNA-binding domain-like"/>
    <property type="match status" value="1"/>
</dbReference>
<dbReference type="SUPFAM" id="SSF54211">
    <property type="entry name" value="Ribosomal protein S5 domain 2-like"/>
    <property type="match status" value="1"/>
</dbReference>
<dbReference type="PROSITE" id="PS00585">
    <property type="entry name" value="RIBOSOMAL_S5"/>
    <property type="match status" value="1"/>
</dbReference>
<dbReference type="PROSITE" id="PS50881">
    <property type="entry name" value="S5_DSRBD"/>
    <property type="match status" value="1"/>
</dbReference>
<organism>
    <name type="scientific">Yersinia pestis bv. Antiqua (strain Antiqua)</name>
    <dbReference type="NCBI Taxonomy" id="360102"/>
    <lineage>
        <taxon>Bacteria</taxon>
        <taxon>Pseudomonadati</taxon>
        <taxon>Pseudomonadota</taxon>
        <taxon>Gammaproteobacteria</taxon>
        <taxon>Enterobacterales</taxon>
        <taxon>Yersiniaceae</taxon>
        <taxon>Yersinia</taxon>
    </lineage>
</organism>
<comment type="function">
    <text evidence="1">With S4 and S12 plays an important role in translational accuracy.</text>
</comment>
<comment type="function">
    <text evidence="1">Located at the back of the 30S subunit body where it stabilizes the conformation of the head with respect to the body.</text>
</comment>
<comment type="subunit">
    <text evidence="1">Part of the 30S ribosomal subunit. Contacts proteins S4 and S8.</text>
</comment>
<comment type="domain">
    <text>The N-terminal domain interacts with the head of the 30S subunit; the C-terminal domain interacts with the body and contacts protein S4. The interaction surface between S4 and S5 is involved in control of translational fidelity.</text>
</comment>
<comment type="similarity">
    <text evidence="1">Belongs to the universal ribosomal protein uS5 family.</text>
</comment>
<gene>
    <name evidence="1" type="primary">rpsE</name>
    <name type="ordered locus">YPA_3246</name>
</gene>